<feature type="chain" id="PRO_1000199079" description="Cysteine--tRNA ligase">
    <location>
        <begin position="1"/>
        <end position="469"/>
    </location>
</feature>
<feature type="short sequence motif" description="'HIGH' region">
    <location>
        <begin position="35"/>
        <end position="45"/>
    </location>
</feature>
<feature type="short sequence motif" description="'KMSKS' region">
    <location>
        <begin position="267"/>
        <end position="271"/>
    </location>
</feature>
<feature type="binding site" evidence="1">
    <location>
        <position position="33"/>
    </location>
    <ligand>
        <name>Zn(2+)</name>
        <dbReference type="ChEBI" id="CHEBI:29105"/>
    </ligand>
</feature>
<feature type="binding site" evidence="1">
    <location>
        <position position="211"/>
    </location>
    <ligand>
        <name>Zn(2+)</name>
        <dbReference type="ChEBI" id="CHEBI:29105"/>
    </ligand>
</feature>
<feature type="binding site" evidence="1">
    <location>
        <position position="236"/>
    </location>
    <ligand>
        <name>Zn(2+)</name>
        <dbReference type="ChEBI" id="CHEBI:29105"/>
    </ligand>
</feature>
<feature type="binding site" evidence="1">
    <location>
        <position position="240"/>
    </location>
    <ligand>
        <name>Zn(2+)</name>
        <dbReference type="ChEBI" id="CHEBI:29105"/>
    </ligand>
</feature>
<feature type="binding site" evidence="1">
    <location>
        <position position="270"/>
    </location>
    <ligand>
        <name>ATP</name>
        <dbReference type="ChEBI" id="CHEBI:30616"/>
    </ligand>
</feature>
<evidence type="ECO:0000255" key="1">
    <source>
        <dbReference type="HAMAP-Rule" id="MF_00041"/>
    </source>
</evidence>
<sequence>MTDRARLRLHDTAAGVVRDFVPLRPGHVSIYLCGATVQGLPHIGHVRSGVAFDILRRWLLARGYDVAFIRNVTDIEDKILAKAAAAGRPWWEWAATHERAFTAAYDALDVLPPSAEPRATGHITQMIEMIERLIQAGHAYTGGGDVYFDVLSYPEYGQLSGHKIDDVHQGEGVAAGKRDQRDFTLWKGEKPGEPSWPTPWGRGRPGWHLECSAMARSYLGPEFDIHCGGMDLVFPHHENEIAQSRAAGDGFARYWLHNGWVTMGGEKMSKSLGNVLSMPAMLQRVRPAELRYYLGSAHYRSMLEFSETAMQDAVKAYVGLEDFLHRVRTRVGAVCPGDPTPRFAEALDDDLSVPIALAEIHHVRAEGNRALDAGDHDGALRSASAIRAMMGILGCDPLDQRWESRDETSAALAAVDVLVQAELQNREKAREQRNWALADEIRGRLKRAGIEVTDTADGPQWSLLGGDTK</sequence>
<protein>
    <recommendedName>
        <fullName evidence="1">Cysteine--tRNA ligase</fullName>
        <ecNumber evidence="1">6.1.1.16</ecNumber>
    </recommendedName>
    <alternativeName>
        <fullName evidence="1">Cysteinyl-tRNA synthetase</fullName>
        <shortName evidence="1">CysRS</shortName>
    </alternativeName>
</protein>
<reference key="1">
    <citation type="journal article" date="2009" name="Vaccine">
        <title>Whole genome sequence analysis of Mycobacterium bovis bacillus Calmette-Guerin (BCG) Tokyo 172: a comparative study of BCG vaccine substrains.</title>
        <authorList>
            <person name="Seki M."/>
            <person name="Honda I."/>
            <person name="Fujita I."/>
            <person name="Yano I."/>
            <person name="Yamamoto S."/>
            <person name="Koyama A."/>
        </authorList>
    </citation>
    <scope>NUCLEOTIDE SEQUENCE [LARGE SCALE GENOMIC DNA]</scope>
    <source>
        <strain>BCG / Tokyo 172 / ATCC 35737 / TMC 1019</strain>
    </source>
</reference>
<organism>
    <name type="scientific">Mycobacterium bovis (strain BCG / Tokyo 172 / ATCC 35737 / TMC 1019)</name>
    <dbReference type="NCBI Taxonomy" id="561275"/>
    <lineage>
        <taxon>Bacteria</taxon>
        <taxon>Bacillati</taxon>
        <taxon>Actinomycetota</taxon>
        <taxon>Actinomycetes</taxon>
        <taxon>Mycobacteriales</taxon>
        <taxon>Mycobacteriaceae</taxon>
        <taxon>Mycobacterium</taxon>
        <taxon>Mycobacterium tuberculosis complex</taxon>
    </lineage>
</organism>
<dbReference type="EC" id="6.1.1.16" evidence="1"/>
<dbReference type="EMBL" id="AP010918">
    <property type="protein sequence ID" value="BAH27918.1"/>
    <property type="molecule type" value="Genomic_DNA"/>
</dbReference>
<dbReference type="RefSeq" id="WP_003900108.1">
    <property type="nucleotide sequence ID" value="NZ_CP014566.1"/>
</dbReference>
<dbReference type="SMR" id="C1AI39"/>
<dbReference type="GeneID" id="45427568"/>
<dbReference type="KEGG" id="mbt:JTY_3646"/>
<dbReference type="HOGENOM" id="CLU_013528_0_1_11"/>
<dbReference type="GO" id="GO:0005829">
    <property type="term" value="C:cytosol"/>
    <property type="evidence" value="ECO:0007669"/>
    <property type="project" value="TreeGrafter"/>
</dbReference>
<dbReference type="GO" id="GO:0005524">
    <property type="term" value="F:ATP binding"/>
    <property type="evidence" value="ECO:0007669"/>
    <property type="project" value="UniProtKB-UniRule"/>
</dbReference>
<dbReference type="GO" id="GO:0004817">
    <property type="term" value="F:cysteine-tRNA ligase activity"/>
    <property type="evidence" value="ECO:0007669"/>
    <property type="project" value="UniProtKB-UniRule"/>
</dbReference>
<dbReference type="GO" id="GO:0008270">
    <property type="term" value="F:zinc ion binding"/>
    <property type="evidence" value="ECO:0007669"/>
    <property type="project" value="UniProtKB-UniRule"/>
</dbReference>
<dbReference type="GO" id="GO:0006423">
    <property type="term" value="P:cysteinyl-tRNA aminoacylation"/>
    <property type="evidence" value="ECO:0007669"/>
    <property type="project" value="UniProtKB-UniRule"/>
</dbReference>
<dbReference type="CDD" id="cd00672">
    <property type="entry name" value="CysRS_core"/>
    <property type="match status" value="1"/>
</dbReference>
<dbReference type="FunFam" id="1.20.120.1910:FF:000006">
    <property type="entry name" value="Cysteine--tRNA ligase"/>
    <property type="match status" value="1"/>
</dbReference>
<dbReference type="FunFam" id="3.40.50.620:FF:000068">
    <property type="entry name" value="Cysteine--tRNA ligase"/>
    <property type="match status" value="1"/>
</dbReference>
<dbReference type="Gene3D" id="1.20.120.1910">
    <property type="entry name" value="Cysteine-tRNA ligase, C-terminal anti-codon recognition domain"/>
    <property type="match status" value="1"/>
</dbReference>
<dbReference type="Gene3D" id="3.40.50.620">
    <property type="entry name" value="HUPs"/>
    <property type="match status" value="1"/>
</dbReference>
<dbReference type="HAMAP" id="MF_00041">
    <property type="entry name" value="Cys_tRNA_synth"/>
    <property type="match status" value="1"/>
</dbReference>
<dbReference type="InterPro" id="IPR015803">
    <property type="entry name" value="Cys-tRNA-ligase"/>
</dbReference>
<dbReference type="InterPro" id="IPR015273">
    <property type="entry name" value="Cys-tRNA-synt_Ia_DALR"/>
</dbReference>
<dbReference type="InterPro" id="IPR024909">
    <property type="entry name" value="Cys-tRNA/MSH_ligase"/>
</dbReference>
<dbReference type="InterPro" id="IPR014729">
    <property type="entry name" value="Rossmann-like_a/b/a_fold"/>
</dbReference>
<dbReference type="InterPro" id="IPR032678">
    <property type="entry name" value="tRNA-synt_1_cat_dom"/>
</dbReference>
<dbReference type="InterPro" id="IPR009080">
    <property type="entry name" value="tRNAsynth_Ia_anticodon-bd"/>
</dbReference>
<dbReference type="NCBIfam" id="TIGR00435">
    <property type="entry name" value="cysS"/>
    <property type="match status" value="1"/>
</dbReference>
<dbReference type="PANTHER" id="PTHR10890:SF30">
    <property type="entry name" value="CYSTEINE--TRNA LIGASE"/>
    <property type="match status" value="1"/>
</dbReference>
<dbReference type="PANTHER" id="PTHR10890">
    <property type="entry name" value="CYSTEINYL-TRNA SYNTHETASE"/>
    <property type="match status" value="1"/>
</dbReference>
<dbReference type="Pfam" id="PF09190">
    <property type="entry name" value="DALR_2"/>
    <property type="match status" value="1"/>
</dbReference>
<dbReference type="Pfam" id="PF01406">
    <property type="entry name" value="tRNA-synt_1e"/>
    <property type="match status" value="1"/>
</dbReference>
<dbReference type="PRINTS" id="PR00983">
    <property type="entry name" value="TRNASYNTHCYS"/>
</dbReference>
<dbReference type="SMART" id="SM00840">
    <property type="entry name" value="DALR_2"/>
    <property type="match status" value="1"/>
</dbReference>
<dbReference type="SUPFAM" id="SSF47323">
    <property type="entry name" value="Anticodon-binding domain of a subclass of class I aminoacyl-tRNA synthetases"/>
    <property type="match status" value="1"/>
</dbReference>
<dbReference type="SUPFAM" id="SSF52374">
    <property type="entry name" value="Nucleotidylyl transferase"/>
    <property type="match status" value="1"/>
</dbReference>
<accession>C1AI39</accession>
<gene>
    <name evidence="1" type="primary">cysS</name>
    <name type="ordered locus">JTY_3646</name>
</gene>
<proteinExistence type="inferred from homology"/>
<comment type="catalytic activity">
    <reaction evidence="1">
        <text>tRNA(Cys) + L-cysteine + ATP = L-cysteinyl-tRNA(Cys) + AMP + diphosphate</text>
        <dbReference type="Rhea" id="RHEA:17773"/>
        <dbReference type="Rhea" id="RHEA-COMP:9661"/>
        <dbReference type="Rhea" id="RHEA-COMP:9679"/>
        <dbReference type="ChEBI" id="CHEBI:30616"/>
        <dbReference type="ChEBI" id="CHEBI:33019"/>
        <dbReference type="ChEBI" id="CHEBI:35235"/>
        <dbReference type="ChEBI" id="CHEBI:78442"/>
        <dbReference type="ChEBI" id="CHEBI:78517"/>
        <dbReference type="ChEBI" id="CHEBI:456215"/>
        <dbReference type="EC" id="6.1.1.16"/>
    </reaction>
</comment>
<comment type="cofactor">
    <cofactor evidence="1">
        <name>Zn(2+)</name>
        <dbReference type="ChEBI" id="CHEBI:29105"/>
    </cofactor>
    <text evidence="1">Binds 1 zinc ion per subunit.</text>
</comment>
<comment type="subunit">
    <text evidence="1">Monomer.</text>
</comment>
<comment type="subcellular location">
    <subcellularLocation>
        <location evidence="1">Cytoplasm</location>
    </subcellularLocation>
</comment>
<comment type="similarity">
    <text evidence="1">Belongs to the class-I aminoacyl-tRNA synthetase family.</text>
</comment>
<name>SYC_MYCBT</name>
<keyword id="KW-0030">Aminoacyl-tRNA synthetase</keyword>
<keyword id="KW-0067">ATP-binding</keyword>
<keyword id="KW-0963">Cytoplasm</keyword>
<keyword id="KW-0436">Ligase</keyword>
<keyword id="KW-0479">Metal-binding</keyword>
<keyword id="KW-0547">Nucleotide-binding</keyword>
<keyword id="KW-0648">Protein biosynthesis</keyword>
<keyword id="KW-0862">Zinc</keyword>